<protein>
    <recommendedName>
        <fullName>Maestro heat-like repeat family member 5</fullName>
    </recommendedName>
</protein>
<name>MROH5_HUMAN</name>
<gene>
    <name type="primary">MROH5</name>
</gene>
<evidence type="ECO:0000256" key="1">
    <source>
        <dbReference type="SAM" id="MobiDB-lite"/>
    </source>
</evidence>
<evidence type="ECO:0000305" key="2"/>
<sequence>MDRQCSERPYSCTPTGRVSSAVSQNSRISPPVSTSMKDSSCMKVHQDSARRDRWSHPTTILLHKSQSSQATLMLQEHRMFMGEAYSAATGFKMLQDMNSADPFHLKYIIKKIKNMAHGSPKLVMETIHDYFIDNPEISSRHKFRLFQTLEMVIGASDVLEETWEKTFTRLALENMTKATELEDIYQDAASNMLVAICRHSWRVVAQHLETELLTGVFPHRSLLYVMGVLSSSEELFSQEDKACWEEQLIQMAIKSVPFLSTDVWSKELLWTLTTPSWTQQEQSPEKAFLFTYYGLILQAEKNGATVRRHLQALLETSHQWPKQREGMALTLGLAATRHLDDVWAVLDQFGRSRPIRWSLPSSSPKNSEDLRWKWASSTILLAYGQVAAKARAHILPWVDNIVSRMVFYFHYSSWDETLKQSFLTATLMLMGAVSRSEGAHSYEFFQTSELLQCLMVLMEKEPQDTLCTRSRQQAMHIASSLCKLRPPIDLERKSQLLSTCFRSVFALPLLDALEKHTCLFLEPPNIQLWPVARERAGWTHQGWGPRAVLHCSEHLQSLYSRTMEALDFMLQSLIMQNPTADELHFLLSHLYIWLASEKAHERQRAVHSCMILLKFLNHNGYLDPKEDFKRIGQLVGILGMLCQDPDRATQRCSLEGASHLYQLLMCHKTGEALQAESQAPKELSQAHSDGAPLWNSRDQKATPLGPQEMAKNHIFQLCSFQVIKDIMQQLTLAELSDLIWTAIDGLGSTSPFRVQAASEMLLTAVQEHGAKLEIVSSMAQAIRLRLCSVHIPQAKEKTLHAITLLARSHTCELVATFLNISIPLDSHTFQLWRALGAGQPTSHLVLTTLLACLQERPLPTGASDSSPCPKEKTYLRLLAAMNMLHELQFAREFKQAVQEGYPKLFLALLTQMHYVLELNLPSEPQPKQQAQEAAVPSPQSCSTSLEALKSLLSTTGHWHDFAHLELQGSWELFTTIHTYPKGVGLLARAMVQNHCRQIPAVLRQLLPSLQSPQERERKVAILILTKFLYSPVLLEVLPKQAALTVLAQGLHDPSPEVRVLSLQGLSNILFHPDKGSLLQGQLRPLLDGFFQSSDQVIVCIMGTVSDTLHRLGAQGTGSQSLGVAISTRSFFNDERDGIRAAAMALFGDLVAAMADRELSGLRTQVHQSMVPLLLHLKDQCPAVATQAKFTFYRCAVLLRWRLLHTLFCTLAWERGLSARHFLWTCLMTRSQEEFSIHLSQALSYLHSHSCHIKTWVTLFIGHTICYHPQAVFQMLNAVDTNLLFRTFEHLRSDPEPSIREFATSQLSFLQKVSARPKQ</sequence>
<proteinExistence type="evidence at transcript level"/>
<organism>
    <name type="scientific">Homo sapiens</name>
    <name type="common">Human</name>
    <dbReference type="NCBI Taxonomy" id="9606"/>
    <lineage>
        <taxon>Eukaryota</taxon>
        <taxon>Metazoa</taxon>
        <taxon>Chordata</taxon>
        <taxon>Craniata</taxon>
        <taxon>Vertebrata</taxon>
        <taxon>Euteleostomi</taxon>
        <taxon>Mammalia</taxon>
        <taxon>Eutheria</taxon>
        <taxon>Euarchontoglires</taxon>
        <taxon>Primates</taxon>
        <taxon>Haplorrhini</taxon>
        <taxon>Catarrhini</taxon>
        <taxon>Hominidae</taxon>
        <taxon>Homo</taxon>
    </lineage>
</organism>
<reference key="1">
    <citation type="journal article" date="2004" name="Nat. Genet.">
        <title>Complete sequencing and characterization of 21,243 full-length human cDNAs.</title>
        <authorList>
            <person name="Ota T."/>
            <person name="Suzuki Y."/>
            <person name="Nishikawa T."/>
            <person name="Otsuki T."/>
            <person name="Sugiyama T."/>
            <person name="Irie R."/>
            <person name="Wakamatsu A."/>
            <person name="Hayashi K."/>
            <person name="Sato H."/>
            <person name="Nagai K."/>
            <person name="Kimura K."/>
            <person name="Makita H."/>
            <person name="Sekine M."/>
            <person name="Obayashi M."/>
            <person name="Nishi T."/>
            <person name="Shibahara T."/>
            <person name="Tanaka T."/>
            <person name="Ishii S."/>
            <person name="Yamamoto J."/>
            <person name="Saito K."/>
            <person name="Kawai Y."/>
            <person name="Isono Y."/>
            <person name="Nakamura Y."/>
            <person name="Nagahari K."/>
            <person name="Murakami K."/>
            <person name="Yasuda T."/>
            <person name="Iwayanagi T."/>
            <person name="Wagatsuma M."/>
            <person name="Shiratori A."/>
            <person name="Sudo H."/>
            <person name="Hosoiri T."/>
            <person name="Kaku Y."/>
            <person name="Kodaira H."/>
            <person name="Kondo H."/>
            <person name="Sugawara M."/>
            <person name="Takahashi M."/>
            <person name="Kanda K."/>
            <person name="Yokoi T."/>
            <person name="Furuya T."/>
            <person name="Kikkawa E."/>
            <person name="Omura Y."/>
            <person name="Abe K."/>
            <person name="Kamihara K."/>
            <person name="Katsuta N."/>
            <person name="Sato K."/>
            <person name="Tanikawa M."/>
            <person name="Yamazaki M."/>
            <person name="Ninomiya K."/>
            <person name="Ishibashi T."/>
            <person name="Yamashita H."/>
            <person name="Murakawa K."/>
            <person name="Fujimori K."/>
            <person name="Tanai H."/>
            <person name="Kimata M."/>
            <person name="Watanabe M."/>
            <person name="Hiraoka S."/>
            <person name="Chiba Y."/>
            <person name="Ishida S."/>
            <person name="Ono Y."/>
            <person name="Takiguchi S."/>
            <person name="Watanabe S."/>
            <person name="Yosida M."/>
            <person name="Hotuta T."/>
            <person name="Kusano J."/>
            <person name="Kanehori K."/>
            <person name="Takahashi-Fujii A."/>
            <person name="Hara H."/>
            <person name="Tanase T.-O."/>
            <person name="Nomura Y."/>
            <person name="Togiya S."/>
            <person name="Komai F."/>
            <person name="Hara R."/>
            <person name="Takeuchi K."/>
            <person name="Arita M."/>
            <person name="Imose N."/>
            <person name="Musashino K."/>
            <person name="Yuuki H."/>
            <person name="Oshima A."/>
            <person name="Sasaki N."/>
            <person name="Aotsuka S."/>
            <person name="Yoshikawa Y."/>
            <person name="Matsunawa H."/>
            <person name="Ichihara T."/>
            <person name="Shiohata N."/>
            <person name="Sano S."/>
            <person name="Moriya S."/>
            <person name="Momiyama H."/>
            <person name="Satoh N."/>
            <person name="Takami S."/>
            <person name="Terashima Y."/>
            <person name="Suzuki O."/>
            <person name="Nakagawa S."/>
            <person name="Senoh A."/>
            <person name="Mizoguchi H."/>
            <person name="Goto Y."/>
            <person name="Shimizu F."/>
            <person name="Wakebe H."/>
            <person name="Hishigaki H."/>
            <person name="Watanabe T."/>
            <person name="Sugiyama A."/>
            <person name="Takemoto M."/>
            <person name="Kawakami B."/>
            <person name="Yamazaki M."/>
            <person name="Watanabe K."/>
            <person name="Kumagai A."/>
            <person name="Itakura S."/>
            <person name="Fukuzumi Y."/>
            <person name="Fujimori Y."/>
            <person name="Komiyama M."/>
            <person name="Tashiro H."/>
            <person name="Tanigami A."/>
            <person name="Fujiwara T."/>
            <person name="Ono T."/>
            <person name="Yamada K."/>
            <person name="Fujii Y."/>
            <person name="Ozaki K."/>
            <person name="Hirao M."/>
            <person name="Ohmori Y."/>
            <person name="Kawabata A."/>
            <person name="Hikiji T."/>
            <person name="Kobatake N."/>
            <person name="Inagaki H."/>
            <person name="Ikema Y."/>
            <person name="Okamoto S."/>
            <person name="Okitani R."/>
            <person name="Kawakami T."/>
            <person name="Noguchi S."/>
            <person name="Itoh T."/>
            <person name="Shigeta K."/>
            <person name="Senba T."/>
            <person name="Matsumura K."/>
            <person name="Nakajima Y."/>
            <person name="Mizuno T."/>
            <person name="Morinaga M."/>
            <person name="Sasaki M."/>
            <person name="Togashi T."/>
            <person name="Oyama M."/>
            <person name="Hata H."/>
            <person name="Watanabe M."/>
            <person name="Komatsu T."/>
            <person name="Mizushima-Sugano J."/>
            <person name="Satoh T."/>
            <person name="Shirai Y."/>
            <person name="Takahashi Y."/>
            <person name="Nakagawa K."/>
            <person name="Okumura K."/>
            <person name="Nagase T."/>
            <person name="Nomura N."/>
            <person name="Kikuchi H."/>
            <person name="Masuho Y."/>
            <person name="Yamashita R."/>
            <person name="Nakai K."/>
            <person name="Yada T."/>
            <person name="Nakamura Y."/>
            <person name="Ohara O."/>
            <person name="Isogai T."/>
            <person name="Sugano S."/>
        </authorList>
    </citation>
    <scope>NUCLEOTIDE SEQUENCE [LARGE SCALE MRNA]</scope>
    <source>
        <tissue>Testis</tissue>
    </source>
</reference>
<reference key="2">
    <citation type="journal article" date="2006" name="Nature">
        <title>DNA sequence and analysis of human chromosome 8.</title>
        <authorList>
            <person name="Nusbaum C."/>
            <person name="Mikkelsen T.S."/>
            <person name="Zody M.C."/>
            <person name="Asakawa S."/>
            <person name="Taudien S."/>
            <person name="Garber M."/>
            <person name="Kodira C.D."/>
            <person name="Schueler M.G."/>
            <person name="Shimizu A."/>
            <person name="Whittaker C.A."/>
            <person name="Chang J.L."/>
            <person name="Cuomo C.A."/>
            <person name="Dewar K."/>
            <person name="FitzGerald M.G."/>
            <person name="Yang X."/>
            <person name="Allen N.R."/>
            <person name="Anderson S."/>
            <person name="Asakawa T."/>
            <person name="Blechschmidt K."/>
            <person name="Bloom T."/>
            <person name="Borowsky M.L."/>
            <person name="Butler J."/>
            <person name="Cook A."/>
            <person name="Corum B."/>
            <person name="DeArellano K."/>
            <person name="DeCaprio D."/>
            <person name="Dooley K.T."/>
            <person name="Dorris L. III"/>
            <person name="Engels R."/>
            <person name="Gloeckner G."/>
            <person name="Hafez N."/>
            <person name="Hagopian D.S."/>
            <person name="Hall J.L."/>
            <person name="Ishikawa S.K."/>
            <person name="Jaffe D.B."/>
            <person name="Kamat A."/>
            <person name="Kudoh J."/>
            <person name="Lehmann R."/>
            <person name="Lokitsang T."/>
            <person name="Macdonald P."/>
            <person name="Major J.E."/>
            <person name="Matthews C.D."/>
            <person name="Mauceli E."/>
            <person name="Menzel U."/>
            <person name="Mihalev A.H."/>
            <person name="Minoshima S."/>
            <person name="Murayama Y."/>
            <person name="Naylor J.W."/>
            <person name="Nicol R."/>
            <person name="Nguyen C."/>
            <person name="O'Leary S.B."/>
            <person name="O'Neill K."/>
            <person name="Parker S.C.J."/>
            <person name="Polley A."/>
            <person name="Raymond C.K."/>
            <person name="Reichwald K."/>
            <person name="Rodriguez J."/>
            <person name="Sasaki T."/>
            <person name="Schilhabel M."/>
            <person name="Siddiqui R."/>
            <person name="Smith C.L."/>
            <person name="Sneddon T.P."/>
            <person name="Talamas J.A."/>
            <person name="Tenzin P."/>
            <person name="Topham K."/>
            <person name="Venkataraman V."/>
            <person name="Wen G."/>
            <person name="Yamazaki S."/>
            <person name="Young S.K."/>
            <person name="Zeng Q."/>
            <person name="Zimmer A.R."/>
            <person name="Rosenthal A."/>
            <person name="Birren B.W."/>
            <person name="Platzer M."/>
            <person name="Shimizu N."/>
            <person name="Lander E.S."/>
        </authorList>
    </citation>
    <scope>NUCLEOTIDE SEQUENCE [LARGE SCALE GENOMIC DNA]</scope>
</reference>
<dbReference type="EMBL" id="AK125848">
    <property type="protein sequence ID" value="BAC86317.1"/>
    <property type="molecule type" value="mRNA"/>
</dbReference>
<dbReference type="EMBL" id="AC138647">
    <property type="status" value="NOT_ANNOTATED_CDS"/>
    <property type="molecule type" value="Genomic_DNA"/>
</dbReference>
<dbReference type="EMBL" id="AC100803">
    <property type="status" value="NOT_ANNOTATED_CDS"/>
    <property type="molecule type" value="Genomic_DNA"/>
</dbReference>
<dbReference type="RefSeq" id="NP_997297.2">
    <property type="nucleotide sequence ID" value="NM_207414.3"/>
</dbReference>
<dbReference type="BioGRID" id="133232">
    <property type="interactions" value="8"/>
</dbReference>
<dbReference type="FunCoup" id="Q6ZUA9">
    <property type="interactions" value="208"/>
</dbReference>
<dbReference type="GlyGen" id="Q6ZUA9">
    <property type="glycosylation" value="1 site, 1 O-linked glycan (1 site)"/>
</dbReference>
<dbReference type="iPTMnet" id="Q6ZUA9"/>
<dbReference type="PhosphoSitePlus" id="Q6ZUA9"/>
<dbReference type="BioMuta" id="MROH5"/>
<dbReference type="DMDM" id="476007234"/>
<dbReference type="jPOST" id="Q6ZUA9"/>
<dbReference type="MassIVE" id="Q6ZUA9"/>
<dbReference type="PeptideAtlas" id="Q6ZUA9"/>
<dbReference type="DNASU" id="389690"/>
<dbReference type="Ensembl" id="ENST00000707626.2">
    <property type="protein sequence ID" value="ENSP00000516935.1"/>
    <property type="gene ID" value="ENSG00000291473.2"/>
</dbReference>
<dbReference type="GeneID" id="389690"/>
<dbReference type="KEGG" id="hsa:389690"/>
<dbReference type="MANE-Select" id="ENST00000707626.2">
    <property type="protein sequence ID" value="ENSP00000516935.1"/>
    <property type="RefSeq nucleotide sequence ID" value="NM_207414.3"/>
    <property type="RefSeq protein sequence ID" value="NP_997297.2"/>
</dbReference>
<dbReference type="AGR" id="HGNC:42976"/>
<dbReference type="CTD" id="389690"/>
<dbReference type="DisGeNET" id="389690"/>
<dbReference type="GeneCards" id="MROH5"/>
<dbReference type="HGNC" id="HGNC:42976">
    <property type="gene designation" value="MROH5"/>
</dbReference>
<dbReference type="neXtProt" id="NX_Q6ZUA9"/>
<dbReference type="InParanoid" id="Q6ZUA9"/>
<dbReference type="OrthoDB" id="1884734at2759"/>
<dbReference type="PAN-GO" id="Q6ZUA9">
    <property type="GO annotations" value="1 GO annotation based on evolutionary models"/>
</dbReference>
<dbReference type="PathwayCommons" id="Q6ZUA9"/>
<dbReference type="SignaLink" id="Q6ZUA9"/>
<dbReference type="BioGRID-ORCS" id="389690">
    <property type="hits" value="5 hits in 235 CRISPR screens"/>
</dbReference>
<dbReference type="ChiTaRS" id="MROH5">
    <property type="organism name" value="human"/>
</dbReference>
<dbReference type="GenomeRNAi" id="389690"/>
<dbReference type="Pharos" id="Q6ZUA9">
    <property type="development level" value="Tdark"/>
</dbReference>
<dbReference type="Proteomes" id="UP000005640">
    <property type="component" value="Unplaced"/>
</dbReference>
<dbReference type="RNAct" id="Q6ZUA9">
    <property type="molecule type" value="protein"/>
</dbReference>
<dbReference type="GO" id="GO:0005737">
    <property type="term" value="C:cytoplasm"/>
    <property type="evidence" value="ECO:0000318"/>
    <property type="project" value="GO_Central"/>
</dbReference>
<dbReference type="Gene3D" id="1.25.10.10">
    <property type="entry name" value="Leucine-rich Repeat Variant"/>
    <property type="match status" value="1"/>
</dbReference>
<dbReference type="InterPro" id="IPR011989">
    <property type="entry name" value="ARM-like"/>
</dbReference>
<dbReference type="InterPro" id="IPR016024">
    <property type="entry name" value="ARM-type_fold"/>
</dbReference>
<dbReference type="InterPro" id="IPR055406">
    <property type="entry name" value="HEAT_Maestro"/>
</dbReference>
<dbReference type="InterPro" id="IPR055408">
    <property type="entry name" value="HEAT_MROH2B-like"/>
</dbReference>
<dbReference type="InterPro" id="IPR048465">
    <property type="entry name" value="Maestro-like_HEAT"/>
</dbReference>
<dbReference type="InterPro" id="IPR045206">
    <property type="entry name" value="Maestro_heat-like_prot"/>
</dbReference>
<dbReference type="PANTHER" id="PTHR23120:SF6">
    <property type="entry name" value="MAESTRO HEAT-LIKE REPEAT FAMILY MEMBER 5"/>
    <property type="match status" value="1"/>
</dbReference>
<dbReference type="PANTHER" id="PTHR23120">
    <property type="entry name" value="MAESTRO-RELATED HEAT DOMAIN-CONTAINING"/>
    <property type="match status" value="1"/>
</dbReference>
<dbReference type="Pfam" id="PF21047">
    <property type="entry name" value="HEAT_Maestro"/>
    <property type="match status" value="1"/>
</dbReference>
<dbReference type="Pfam" id="PF23210">
    <property type="entry name" value="HEAT_Maestro_2"/>
    <property type="match status" value="1"/>
</dbReference>
<dbReference type="Pfam" id="PF23227">
    <property type="entry name" value="HEAT_MROH2B_C"/>
    <property type="match status" value="1"/>
</dbReference>
<dbReference type="SUPFAM" id="SSF48371">
    <property type="entry name" value="ARM repeat"/>
    <property type="match status" value="1"/>
</dbReference>
<feature type="chain" id="PRO_0000421988" description="Maestro heat-like repeat family member 5">
    <location>
        <begin position="1"/>
        <end position="1318"/>
    </location>
</feature>
<feature type="repeat" description="HEAT 1">
    <location>
        <begin position="581"/>
        <end position="618"/>
    </location>
</feature>
<feature type="repeat" description="HEAT 2">
    <location>
        <begin position="769"/>
        <end position="811"/>
    </location>
</feature>
<feature type="repeat" description="HEAT 3">
    <location>
        <begin position="840"/>
        <end position="880"/>
    </location>
</feature>
<feature type="repeat" description="HEAT 4">
    <location>
        <begin position="996"/>
        <end position="1033"/>
    </location>
</feature>
<feature type="repeat" description="HEAT 5">
    <location>
        <begin position="1037"/>
        <end position="1074"/>
    </location>
</feature>
<feature type="repeat" description="HEAT 6">
    <location>
        <begin position="1076"/>
        <end position="1113"/>
    </location>
</feature>
<feature type="repeat" description="HEAT 7">
    <location>
        <begin position="1118"/>
        <end position="1155"/>
    </location>
</feature>
<feature type="repeat" description="HEAT 8">
    <location>
        <begin position="1164"/>
        <end position="1200"/>
    </location>
</feature>
<feature type="repeat" description="HEAT 9">
    <location>
        <begin position="1278"/>
        <end position="1315"/>
    </location>
</feature>
<feature type="region of interest" description="Disordered" evidence="1">
    <location>
        <begin position="1"/>
        <end position="38"/>
    </location>
</feature>
<feature type="region of interest" description="Disordered" evidence="1">
    <location>
        <begin position="676"/>
        <end position="695"/>
    </location>
</feature>
<feature type="compositionally biased region" description="Polar residues" evidence="1">
    <location>
        <begin position="12"/>
        <end position="38"/>
    </location>
</feature>
<feature type="sequence conflict" description="In Ref. 1; BAC86317." evidence="2" ref="1">
    <original>RPY</original>
    <variation>KPH</variation>
    <location>
        <begin position="8"/>
        <end position="10"/>
    </location>
</feature>
<feature type="sequence conflict" description="In Ref. 1; BAC86317." evidence="2" ref="1">
    <original>K</original>
    <variation>E</variation>
    <location>
        <position position="43"/>
    </location>
</feature>
<feature type="sequence conflict" description="In Ref. 1; BAC86317." evidence="2" ref="1">
    <original>L</original>
    <variation>P</variation>
    <location>
        <position position="74"/>
    </location>
</feature>
<feature type="sequence conflict" description="In Ref. 1; BAC86317." evidence="2" ref="1">
    <original>G</original>
    <variation>C</variation>
    <location>
        <position position="90"/>
    </location>
</feature>
<feature type="sequence conflict" description="In Ref. 1; BAC86317." evidence="2" ref="1">
    <original>L</original>
    <variation>M</variation>
    <location>
        <position position="289"/>
    </location>
</feature>
<feature type="sequence conflict" description="In Ref. 1; BAC86317." evidence="2" ref="1">
    <original>L</original>
    <variation>S</variation>
    <location>
        <position position="331"/>
    </location>
</feature>
<feature type="sequence conflict" description="In Ref. 1; BAC86317." evidence="2" ref="1">
    <original>D</original>
    <variation>N</variation>
    <location>
        <position position="725"/>
    </location>
</feature>
<feature type="sequence conflict" description="In Ref. 1; BAC86317." evidence="2" ref="1">
    <original>G</original>
    <variation>E</variation>
    <location>
        <position position="838"/>
    </location>
</feature>
<feature type="sequence conflict" description="In Ref. 1; BAC86317." evidence="2" ref="1">
    <original>L</original>
    <variation>P</variation>
    <location>
        <position position="985"/>
    </location>
</feature>
<feature type="sequence conflict" description="In Ref. 1; BAC86317." evidence="2" ref="1">
    <original>G</original>
    <variation>S</variation>
    <location>
        <position position="1088"/>
    </location>
</feature>
<accession>Q6ZUA9</accession>
<keyword id="KW-1185">Reference proteome</keyword>
<keyword id="KW-0677">Repeat</keyword>
<comment type="caution">
    <text evidence="2">MROH5 may be both a gene and a pseudogene in the human population, the reference genome corresponding currently to the non-functional allele with a stop codon at position 925. The sequence shown here with a Gln at that position is the one of the functional protein.</text>
</comment>